<sequence>MRHRCRVPQLGKAADQRKALLRSLTTELIRHGQIKTTKTRAKAVRSEVERMITLAKDGSLSARRRAIGYLYDKQLVHALFAEAPERYSNRKGGYTRIVRTLRRRGDNAEMAIIELM</sequence>
<gene>
    <name evidence="1" type="primary">rplQ</name>
    <name evidence="1" type="synonym">rpl17</name>
    <name type="ordered locus">cce_4040</name>
</gene>
<evidence type="ECO:0000255" key="1">
    <source>
        <dbReference type="HAMAP-Rule" id="MF_01368"/>
    </source>
</evidence>
<evidence type="ECO:0000305" key="2"/>
<accession>B1WQT6</accession>
<proteinExistence type="inferred from homology"/>
<dbReference type="EMBL" id="CP000806">
    <property type="protein sequence ID" value="ACB53388.1"/>
    <property type="molecule type" value="Genomic_DNA"/>
</dbReference>
<dbReference type="RefSeq" id="WP_009543874.1">
    <property type="nucleotide sequence ID" value="NC_010546.1"/>
</dbReference>
<dbReference type="SMR" id="B1WQT6"/>
<dbReference type="STRING" id="43989.cce_4040"/>
<dbReference type="KEGG" id="cyt:cce_4040"/>
<dbReference type="eggNOG" id="COG0203">
    <property type="taxonomic scope" value="Bacteria"/>
</dbReference>
<dbReference type="HOGENOM" id="CLU_074407_2_2_3"/>
<dbReference type="OrthoDB" id="9809073at2"/>
<dbReference type="Proteomes" id="UP000001203">
    <property type="component" value="Chromosome circular"/>
</dbReference>
<dbReference type="GO" id="GO:0022625">
    <property type="term" value="C:cytosolic large ribosomal subunit"/>
    <property type="evidence" value="ECO:0007669"/>
    <property type="project" value="TreeGrafter"/>
</dbReference>
<dbReference type="GO" id="GO:0003735">
    <property type="term" value="F:structural constituent of ribosome"/>
    <property type="evidence" value="ECO:0007669"/>
    <property type="project" value="InterPro"/>
</dbReference>
<dbReference type="GO" id="GO:0006412">
    <property type="term" value="P:translation"/>
    <property type="evidence" value="ECO:0007669"/>
    <property type="project" value="UniProtKB-UniRule"/>
</dbReference>
<dbReference type="FunFam" id="3.90.1030.10:FF:000001">
    <property type="entry name" value="50S ribosomal protein L17"/>
    <property type="match status" value="1"/>
</dbReference>
<dbReference type="Gene3D" id="3.90.1030.10">
    <property type="entry name" value="Ribosomal protein L17"/>
    <property type="match status" value="1"/>
</dbReference>
<dbReference type="HAMAP" id="MF_01368">
    <property type="entry name" value="Ribosomal_bL17"/>
    <property type="match status" value="1"/>
</dbReference>
<dbReference type="InterPro" id="IPR000456">
    <property type="entry name" value="Ribosomal_bL17"/>
</dbReference>
<dbReference type="InterPro" id="IPR047859">
    <property type="entry name" value="Ribosomal_bL17_CS"/>
</dbReference>
<dbReference type="InterPro" id="IPR036373">
    <property type="entry name" value="Ribosomal_bL17_sf"/>
</dbReference>
<dbReference type="NCBIfam" id="TIGR00059">
    <property type="entry name" value="L17"/>
    <property type="match status" value="1"/>
</dbReference>
<dbReference type="PANTHER" id="PTHR14413:SF16">
    <property type="entry name" value="LARGE RIBOSOMAL SUBUNIT PROTEIN BL17M"/>
    <property type="match status" value="1"/>
</dbReference>
<dbReference type="PANTHER" id="PTHR14413">
    <property type="entry name" value="RIBOSOMAL PROTEIN L17"/>
    <property type="match status" value="1"/>
</dbReference>
<dbReference type="Pfam" id="PF01196">
    <property type="entry name" value="Ribosomal_L17"/>
    <property type="match status" value="1"/>
</dbReference>
<dbReference type="SUPFAM" id="SSF64263">
    <property type="entry name" value="Prokaryotic ribosomal protein L17"/>
    <property type="match status" value="1"/>
</dbReference>
<dbReference type="PROSITE" id="PS01167">
    <property type="entry name" value="RIBOSOMAL_L17"/>
    <property type="match status" value="1"/>
</dbReference>
<reference key="1">
    <citation type="journal article" date="2008" name="Proc. Natl. Acad. Sci. U.S.A.">
        <title>The genome of Cyanothece 51142, a unicellular diazotrophic cyanobacterium important in the marine nitrogen cycle.</title>
        <authorList>
            <person name="Welsh E.A."/>
            <person name="Liberton M."/>
            <person name="Stoeckel J."/>
            <person name="Loh T."/>
            <person name="Elvitigala T."/>
            <person name="Wang C."/>
            <person name="Wollam A."/>
            <person name="Fulton R.S."/>
            <person name="Clifton S.W."/>
            <person name="Jacobs J.M."/>
            <person name="Aurora R."/>
            <person name="Ghosh B.K."/>
            <person name="Sherman L.A."/>
            <person name="Smith R.D."/>
            <person name="Wilson R.K."/>
            <person name="Pakrasi H.B."/>
        </authorList>
    </citation>
    <scope>NUCLEOTIDE SEQUENCE [LARGE SCALE GENOMIC DNA]</scope>
    <source>
        <strain>ATCC 51142 / BH68</strain>
    </source>
</reference>
<keyword id="KW-1185">Reference proteome</keyword>
<keyword id="KW-0687">Ribonucleoprotein</keyword>
<keyword id="KW-0689">Ribosomal protein</keyword>
<comment type="subunit">
    <text evidence="1">Part of the 50S ribosomal subunit. Contacts protein L32.</text>
</comment>
<comment type="similarity">
    <text evidence="1">Belongs to the bacterial ribosomal protein bL17 family.</text>
</comment>
<protein>
    <recommendedName>
        <fullName evidence="1">Large ribosomal subunit protein bL17</fullName>
    </recommendedName>
    <alternativeName>
        <fullName evidence="2">50S ribosomal protein L17</fullName>
    </alternativeName>
</protein>
<organism>
    <name type="scientific">Crocosphaera subtropica (strain ATCC 51142 / BH68)</name>
    <name type="common">Cyanothece sp. (strain ATCC 51142)</name>
    <dbReference type="NCBI Taxonomy" id="43989"/>
    <lineage>
        <taxon>Bacteria</taxon>
        <taxon>Bacillati</taxon>
        <taxon>Cyanobacteriota</taxon>
        <taxon>Cyanophyceae</taxon>
        <taxon>Oscillatoriophycideae</taxon>
        <taxon>Chroococcales</taxon>
        <taxon>Aphanothecaceae</taxon>
        <taxon>Crocosphaera</taxon>
        <taxon>Crocosphaera subtropica</taxon>
    </lineage>
</organism>
<name>RL17_CROS5</name>
<feature type="chain" id="PRO_1000184015" description="Large ribosomal subunit protein bL17">
    <location>
        <begin position="1"/>
        <end position="116"/>
    </location>
</feature>